<evidence type="ECO:0000250" key="1"/>
<evidence type="ECO:0000255" key="2">
    <source>
        <dbReference type="HAMAP-Rule" id="MF_01356"/>
    </source>
</evidence>
<sequence>MGIEGVLKKGFITTSADTVLNYMRTGSLWPVTFGLACCAVEMMHAGMARYDLDRFGIIFRPSPRQADLMIVAGTLTNKMAPALRRVYDQLAEPRWVLSMGSCANGGGYYHYSYSVVRGADRVVPVDVYVPGCPPTAEALIYGLIQLQQKIKRTSTIARDE</sequence>
<comment type="function">
    <text evidence="1">NDH-1 shuttles electrons from NADH, via FMN and iron-sulfur (Fe-S) centers, to quinones in the respiratory chain. Couples the redox reaction to proton translocation (for every two electrons transferred, four hydrogen ions are translocated across the cytoplasmic membrane), and thus conserves the redox energy in a proton gradient (By similarity).</text>
</comment>
<comment type="catalytic activity">
    <reaction evidence="2">
        <text>a quinone + NADH + 5 H(+)(in) = a quinol + NAD(+) + 4 H(+)(out)</text>
        <dbReference type="Rhea" id="RHEA:57888"/>
        <dbReference type="ChEBI" id="CHEBI:15378"/>
        <dbReference type="ChEBI" id="CHEBI:24646"/>
        <dbReference type="ChEBI" id="CHEBI:57540"/>
        <dbReference type="ChEBI" id="CHEBI:57945"/>
        <dbReference type="ChEBI" id="CHEBI:132124"/>
    </reaction>
</comment>
<comment type="cofactor">
    <cofactor evidence="2">
        <name>[4Fe-4S] cluster</name>
        <dbReference type="ChEBI" id="CHEBI:49883"/>
    </cofactor>
    <text evidence="2">Binds 1 [4Fe-4S] cluster.</text>
</comment>
<comment type="subunit">
    <text evidence="2">NDH-1 is composed of 14 different subunits. Subunits NuoB, C, D, E, F, and G constitute the peripheral sector of the complex.</text>
</comment>
<comment type="subcellular location">
    <subcellularLocation>
        <location evidence="2">Cell inner membrane</location>
        <topology evidence="2">Peripheral membrane protein</topology>
        <orientation evidence="2">Cytoplasmic side</orientation>
    </subcellularLocation>
</comment>
<comment type="similarity">
    <text evidence="2">Belongs to the complex I 20 kDa subunit family.</text>
</comment>
<accession>B4RPI3</accession>
<proteinExistence type="inferred from homology"/>
<feature type="chain" id="PRO_0000358428" description="NADH-quinone oxidoreductase subunit B">
    <location>
        <begin position="1"/>
        <end position="160"/>
    </location>
</feature>
<feature type="binding site" evidence="2">
    <location>
        <position position="37"/>
    </location>
    <ligand>
        <name>[4Fe-4S] cluster</name>
        <dbReference type="ChEBI" id="CHEBI:49883"/>
    </ligand>
</feature>
<feature type="binding site" evidence="2">
    <location>
        <position position="38"/>
    </location>
    <ligand>
        <name>[4Fe-4S] cluster</name>
        <dbReference type="ChEBI" id="CHEBI:49883"/>
    </ligand>
</feature>
<feature type="binding site" evidence="2">
    <location>
        <position position="102"/>
    </location>
    <ligand>
        <name>[4Fe-4S] cluster</name>
        <dbReference type="ChEBI" id="CHEBI:49883"/>
    </ligand>
</feature>
<feature type="binding site" evidence="2">
    <location>
        <position position="132"/>
    </location>
    <ligand>
        <name>[4Fe-4S] cluster</name>
        <dbReference type="ChEBI" id="CHEBI:49883"/>
    </ligand>
</feature>
<gene>
    <name evidence="2" type="primary">nuoB</name>
    <name type="ordered locus">NGK_2152</name>
</gene>
<keyword id="KW-0004">4Fe-4S</keyword>
<keyword id="KW-0997">Cell inner membrane</keyword>
<keyword id="KW-1003">Cell membrane</keyword>
<keyword id="KW-0408">Iron</keyword>
<keyword id="KW-0411">Iron-sulfur</keyword>
<keyword id="KW-0472">Membrane</keyword>
<keyword id="KW-0479">Metal-binding</keyword>
<keyword id="KW-0520">NAD</keyword>
<keyword id="KW-0874">Quinone</keyword>
<keyword id="KW-1278">Translocase</keyword>
<keyword id="KW-0813">Transport</keyword>
<keyword id="KW-0830">Ubiquinone</keyword>
<name>NUOB_NEIG2</name>
<protein>
    <recommendedName>
        <fullName evidence="2">NADH-quinone oxidoreductase subunit B</fullName>
        <ecNumber evidence="2">7.1.1.-</ecNumber>
    </recommendedName>
    <alternativeName>
        <fullName evidence="2">NADH dehydrogenase I subunit B</fullName>
    </alternativeName>
    <alternativeName>
        <fullName evidence="2">NDH-1 subunit B</fullName>
    </alternativeName>
</protein>
<reference key="1">
    <citation type="journal article" date="2008" name="J. Bacteriol.">
        <title>Complete genome sequence of Neisseria gonorrhoeae NCCP11945.</title>
        <authorList>
            <person name="Chung G.T."/>
            <person name="Yoo J.S."/>
            <person name="Oh H.B."/>
            <person name="Lee Y.S."/>
            <person name="Cha S.H."/>
            <person name="Kim S.J."/>
            <person name="Yoo C.K."/>
        </authorList>
    </citation>
    <scope>NUCLEOTIDE SEQUENCE [LARGE SCALE GENOMIC DNA]</scope>
    <source>
        <strain>NCCP11945</strain>
    </source>
</reference>
<organism>
    <name type="scientific">Neisseria gonorrhoeae (strain NCCP11945)</name>
    <dbReference type="NCBI Taxonomy" id="521006"/>
    <lineage>
        <taxon>Bacteria</taxon>
        <taxon>Pseudomonadati</taxon>
        <taxon>Pseudomonadota</taxon>
        <taxon>Betaproteobacteria</taxon>
        <taxon>Neisseriales</taxon>
        <taxon>Neisseriaceae</taxon>
        <taxon>Neisseria</taxon>
    </lineage>
</organism>
<dbReference type="EC" id="7.1.1.-" evidence="2"/>
<dbReference type="EMBL" id="CP001050">
    <property type="protein sequence ID" value="ACF30760.1"/>
    <property type="molecule type" value="Genomic_DNA"/>
</dbReference>
<dbReference type="RefSeq" id="WP_002215610.1">
    <property type="nucleotide sequence ID" value="NC_011035.1"/>
</dbReference>
<dbReference type="SMR" id="B4RPI3"/>
<dbReference type="KEGG" id="ngk:NGK_2152"/>
<dbReference type="HOGENOM" id="CLU_055737_7_3_4"/>
<dbReference type="Proteomes" id="UP000002564">
    <property type="component" value="Chromosome"/>
</dbReference>
<dbReference type="GO" id="GO:0005886">
    <property type="term" value="C:plasma membrane"/>
    <property type="evidence" value="ECO:0007669"/>
    <property type="project" value="UniProtKB-SubCell"/>
</dbReference>
<dbReference type="GO" id="GO:0045271">
    <property type="term" value="C:respiratory chain complex I"/>
    <property type="evidence" value="ECO:0007669"/>
    <property type="project" value="TreeGrafter"/>
</dbReference>
<dbReference type="GO" id="GO:0051539">
    <property type="term" value="F:4 iron, 4 sulfur cluster binding"/>
    <property type="evidence" value="ECO:0007669"/>
    <property type="project" value="UniProtKB-KW"/>
</dbReference>
<dbReference type="GO" id="GO:0005506">
    <property type="term" value="F:iron ion binding"/>
    <property type="evidence" value="ECO:0007669"/>
    <property type="project" value="UniProtKB-UniRule"/>
</dbReference>
<dbReference type="GO" id="GO:0008137">
    <property type="term" value="F:NADH dehydrogenase (ubiquinone) activity"/>
    <property type="evidence" value="ECO:0007669"/>
    <property type="project" value="InterPro"/>
</dbReference>
<dbReference type="GO" id="GO:0050136">
    <property type="term" value="F:NADH:ubiquinone reductase (non-electrogenic) activity"/>
    <property type="evidence" value="ECO:0007669"/>
    <property type="project" value="UniProtKB-UniRule"/>
</dbReference>
<dbReference type="GO" id="GO:0048038">
    <property type="term" value="F:quinone binding"/>
    <property type="evidence" value="ECO:0007669"/>
    <property type="project" value="UniProtKB-KW"/>
</dbReference>
<dbReference type="GO" id="GO:0009060">
    <property type="term" value="P:aerobic respiration"/>
    <property type="evidence" value="ECO:0007669"/>
    <property type="project" value="TreeGrafter"/>
</dbReference>
<dbReference type="GO" id="GO:0015990">
    <property type="term" value="P:electron transport coupled proton transport"/>
    <property type="evidence" value="ECO:0007669"/>
    <property type="project" value="TreeGrafter"/>
</dbReference>
<dbReference type="FunFam" id="3.40.50.12280:FF:000001">
    <property type="entry name" value="NADH-quinone oxidoreductase subunit B 2"/>
    <property type="match status" value="1"/>
</dbReference>
<dbReference type="Gene3D" id="3.40.50.12280">
    <property type="match status" value="1"/>
</dbReference>
<dbReference type="HAMAP" id="MF_01356">
    <property type="entry name" value="NDH1_NuoB"/>
    <property type="match status" value="1"/>
</dbReference>
<dbReference type="InterPro" id="IPR006137">
    <property type="entry name" value="NADH_UbQ_OxRdtase-like_20kDa"/>
</dbReference>
<dbReference type="InterPro" id="IPR006138">
    <property type="entry name" value="NADH_UQ_OxRdtase_20Kd_su"/>
</dbReference>
<dbReference type="NCBIfam" id="TIGR01957">
    <property type="entry name" value="nuoB_fam"/>
    <property type="match status" value="1"/>
</dbReference>
<dbReference type="NCBIfam" id="NF005012">
    <property type="entry name" value="PRK06411.1"/>
    <property type="match status" value="1"/>
</dbReference>
<dbReference type="PANTHER" id="PTHR11995">
    <property type="entry name" value="NADH DEHYDROGENASE"/>
    <property type="match status" value="1"/>
</dbReference>
<dbReference type="PANTHER" id="PTHR11995:SF14">
    <property type="entry name" value="NADH DEHYDROGENASE [UBIQUINONE] IRON-SULFUR PROTEIN 7, MITOCHONDRIAL"/>
    <property type="match status" value="1"/>
</dbReference>
<dbReference type="Pfam" id="PF01058">
    <property type="entry name" value="Oxidored_q6"/>
    <property type="match status" value="1"/>
</dbReference>
<dbReference type="SUPFAM" id="SSF56770">
    <property type="entry name" value="HydA/Nqo6-like"/>
    <property type="match status" value="1"/>
</dbReference>
<dbReference type="PROSITE" id="PS01150">
    <property type="entry name" value="COMPLEX1_20K"/>
    <property type="match status" value="1"/>
</dbReference>